<name>Y2280_KLEP7</name>
<evidence type="ECO:0000255" key="1">
    <source>
        <dbReference type="HAMAP-Rule" id="MF_00676"/>
    </source>
</evidence>
<sequence length="148" mass="17215">MSEQPFWQQKTLDDMSDAEWESLCDGCGQCCLHKLMDEDTDEIYFTNVACRQLNIKTCQCRNYARRFEYEPDCIKLTRENLPTFEWLPPTCAYRLLAEGKPLPAWHPLLTGSKAAMHGERISVRHIAVPESTVVDWQDHILNLPDRAR</sequence>
<proteinExistence type="inferred from homology"/>
<accession>A6TAX0</accession>
<organism>
    <name type="scientific">Klebsiella pneumoniae subsp. pneumoniae (strain ATCC 700721 / MGH 78578)</name>
    <dbReference type="NCBI Taxonomy" id="272620"/>
    <lineage>
        <taxon>Bacteria</taxon>
        <taxon>Pseudomonadati</taxon>
        <taxon>Pseudomonadota</taxon>
        <taxon>Gammaproteobacteria</taxon>
        <taxon>Enterobacterales</taxon>
        <taxon>Enterobacteriaceae</taxon>
        <taxon>Klebsiella/Raoultella group</taxon>
        <taxon>Klebsiella</taxon>
        <taxon>Klebsiella pneumoniae complex</taxon>
    </lineage>
</organism>
<protein>
    <recommendedName>
        <fullName evidence="1">UPF0260 protein KPN78578_22800</fullName>
    </recommendedName>
</protein>
<gene>
    <name type="ordered locus">KPN78578_22800</name>
    <name type="ORF">KPN_02315</name>
</gene>
<dbReference type="EMBL" id="CP000647">
    <property type="protein sequence ID" value="ABR77741.1"/>
    <property type="molecule type" value="Genomic_DNA"/>
</dbReference>
<dbReference type="RefSeq" id="WP_002910896.1">
    <property type="nucleotide sequence ID" value="NC_009648.1"/>
</dbReference>
<dbReference type="STRING" id="272620.KPN_02315"/>
<dbReference type="PaxDb" id="272620-KPN_02315"/>
<dbReference type="EnsemblBacteria" id="ABR77741">
    <property type="protein sequence ID" value="ABR77741"/>
    <property type="gene ID" value="KPN_02315"/>
</dbReference>
<dbReference type="KEGG" id="kpn:KPN_02315"/>
<dbReference type="HOGENOM" id="CLU_109769_0_1_6"/>
<dbReference type="Proteomes" id="UP000000265">
    <property type="component" value="Chromosome"/>
</dbReference>
<dbReference type="HAMAP" id="MF_00676">
    <property type="entry name" value="UPF0260"/>
    <property type="match status" value="1"/>
</dbReference>
<dbReference type="InterPro" id="IPR005358">
    <property type="entry name" value="Puta_zinc/iron-chelating_dom"/>
</dbReference>
<dbReference type="InterPro" id="IPR008228">
    <property type="entry name" value="UCP006173"/>
</dbReference>
<dbReference type="NCBIfam" id="NF003498">
    <property type="entry name" value="PRK05170.1-1"/>
    <property type="match status" value="1"/>
</dbReference>
<dbReference type="NCBIfam" id="NF003501">
    <property type="entry name" value="PRK05170.1-5"/>
    <property type="match status" value="1"/>
</dbReference>
<dbReference type="NCBIfam" id="NF003503">
    <property type="entry name" value="PRK05170.2-1"/>
    <property type="match status" value="1"/>
</dbReference>
<dbReference type="NCBIfam" id="NF003507">
    <property type="entry name" value="PRK05170.2-5"/>
    <property type="match status" value="1"/>
</dbReference>
<dbReference type="PANTHER" id="PTHR37421">
    <property type="entry name" value="UPF0260 PROTEIN YCGN"/>
    <property type="match status" value="1"/>
</dbReference>
<dbReference type="PANTHER" id="PTHR37421:SF1">
    <property type="entry name" value="UPF0260 PROTEIN YCGN"/>
    <property type="match status" value="1"/>
</dbReference>
<dbReference type="Pfam" id="PF03692">
    <property type="entry name" value="CxxCxxCC"/>
    <property type="match status" value="1"/>
</dbReference>
<dbReference type="PIRSF" id="PIRSF006173">
    <property type="entry name" value="UCP006173"/>
    <property type="match status" value="1"/>
</dbReference>
<feature type="chain" id="PRO_1000061957" description="UPF0260 protein KPN78578_22800">
    <location>
        <begin position="1"/>
        <end position="148"/>
    </location>
</feature>
<comment type="similarity">
    <text evidence="1">Belongs to the UPF0260 family.</text>
</comment>
<reference key="1">
    <citation type="submission" date="2006-09" db="EMBL/GenBank/DDBJ databases">
        <authorList>
            <consortium name="The Klebsiella pneumonia Genome Sequencing Project"/>
            <person name="McClelland M."/>
            <person name="Sanderson E.K."/>
            <person name="Spieth J."/>
            <person name="Clifton W.S."/>
            <person name="Latreille P."/>
            <person name="Sabo A."/>
            <person name="Pepin K."/>
            <person name="Bhonagiri V."/>
            <person name="Porwollik S."/>
            <person name="Ali J."/>
            <person name="Wilson R.K."/>
        </authorList>
    </citation>
    <scope>NUCLEOTIDE SEQUENCE [LARGE SCALE GENOMIC DNA]</scope>
    <source>
        <strain>ATCC 700721 / MGH 78578</strain>
    </source>
</reference>